<dbReference type="EMBL" id="M93006">
    <property type="protein sequence ID" value="AAB59763.1"/>
    <property type="molecule type" value="Genomic_RNA"/>
</dbReference>
<dbReference type="SMR" id="Q04840"/>
<dbReference type="GO" id="GO:0044166">
    <property type="term" value="C:host cell endoplasmic reticulum lumen"/>
    <property type="evidence" value="ECO:0007669"/>
    <property type="project" value="UniProtKB-SubCell"/>
</dbReference>
<dbReference type="GO" id="GO:0039621">
    <property type="term" value="C:T=13 icosahedral viral capsid"/>
    <property type="evidence" value="ECO:0007669"/>
    <property type="project" value="UniProtKB-UniRule"/>
</dbReference>
<dbReference type="GO" id="GO:0039624">
    <property type="term" value="C:viral outer capsid"/>
    <property type="evidence" value="ECO:0007669"/>
    <property type="project" value="UniProtKB-UniRule"/>
</dbReference>
<dbReference type="GO" id="GO:0046872">
    <property type="term" value="F:metal ion binding"/>
    <property type="evidence" value="ECO:0007669"/>
    <property type="project" value="UniProtKB-KW"/>
</dbReference>
<dbReference type="Gene3D" id="3.40.50.11130">
    <property type="entry name" value="Glycoprotein VP7, domain 1"/>
    <property type="match status" value="1"/>
</dbReference>
<dbReference type="Gene3D" id="2.60.120.800">
    <property type="entry name" value="Rotavirus outer-layer protein VP7, domain 2"/>
    <property type="match status" value="1"/>
</dbReference>
<dbReference type="HAMAP" id="MF_04130">
    <property type="entry name" value="Rota_VP7"/>
    <property type="match status" value="1"/>
</dbReference>
<dbReference type="HAMAP" id="MF_04131">
    <property type="entry name" value="Rota_VP7_A"/>
    <property type="match status" value="1"/>
</dbReference>
<dbReference type="InterPro" id="IPR001963">
    <property type="entry name" value="VP7"/>
</dbReference>
<dbReference type="InterPro" id="IPR042207">
    <property type="entry name" value="VP7_1"/>
</dbReference>
<dbReference type="InterPro" id="IPR042210">
    <property type="entry name" value="VP7_2"/>
</dbReference>
<dbReference type="Pfam" id="PF00434">
    <property type="entry name" value="VP7"/>
    <property type="match status" value="1"/>
</dbReference>
<feature type="signal peptide" evidence="2">
    <location>
        <begin position="1"/>
        <end position="50"/>
    </location>
</feature>
<feature type="chain" id="PRO_0000149610" description="Outer capsid glycoprotein VP7" evidence="2">
    <location>
        <begin position="51"/>
        <end position="326"/>
    </location>
</feature>
<feature type="region of interest" description="CNP motif; interaction with ITGAV/ITGB3" evidence="2">
    <location>
        <begin position="165"/>
        <end position="167"/>
    </location>
</feature>
<feature type="region of interest" description="GPR motif; interaction with ITGAX/ITGB2" evidence="2">
    <location>
        <begin position="253"/>
        <end position="255"/>
    </location>
</feature>
<feature type="binding site" evidence="2">
    <location>
        <position position="95"/>
    </location>
    <ligand>
        <name>Ca(2+)</name>
        <dbReference type="ChEBI" id="CHEBI:29108"/>
        <label>1</label>
    </ligand>
</feature>
<feature type="binding site" evidence="2">
    <location>
        <position position="177"/>
    </location>
    <ligand>
        <name>Ca(2+)</name>
        <dbReference type="ChEBI" id="CHEBI:29108"/>
        <label>2</label>
    </ligand>
</feature>
<feature type="binding site" evidence="2">
    <location>
        <position position="206"/>
    </location>
    <ligand>
        <name>Ca(2+)</name>
        <dbReference type="ChEBI" id="CHEBI:29108"/>
        <label>1</label>
    </ligand>
</feature>
<feature type="binding site" evidence="2">
    <location>
        <position position="214"/>
    </location>
    <ligand>
        <name>Ca(2+)</name>
        <dbReference type="ChEBI" id="CHEBI:29108"/>
        <label>1</label>
    </ligand>
</feature>
<feature type="binding site" evidence="2">
    <location>
        <position position="216"/>
    </location>
    <ligand>
        <name>Ca(2+)</name>
        <dbReference type="ChEBI" id="CHEBI:29108"/>
        <label>1</label>
    </ligand>
</feature>
<feature type="binding site" evidence="2">
    <location>
        <position position="228"/>
    </location>
    <ligand>
        <name>Ca(2+)</name>
        <dbReference type="ChEBI" id="CHEBI:29108"/>
        <label>2</label>
    </ligand>
</feature>
<feature type="binding site" evidence="2">
    <location>
        <position position="229"/>
    </location>
    <ligand>
        <name>Ca(2+)</name>
        <dbReference type="ChEBI" id="CHEBI:29108"/>
        <label>2</label>
    </ligand>
</feature>
<feature type="binding site" evidence="2">
    <location>
        <position position="231"/>
    </location>
    <ligand>
        <name>Ca(2+)</name>
        <dbReference type="ChEBI" id="CHEBI:29108"/>
        <label>2</label>
    </ligand>
</feature>
<feature type="binding site" evidence="2">
    <location>
        <position position="301"/>
    </location>
    <ligand>
        <name>Ca(2+)</name>
        <dbReference type="ChEBI" id="CHEBI:29108"/>
        <label>2</label>
    </ligand>
</feature>
<feature type="glycosylation site" description="N-linked (GlcNAc...) asparagine; by host" evidence="1">
    <location>
        <position position="69"/>
    </location>
</feature>
<feature type="glycosylation site" description="N-linked (GlcNAc...) asparagine; by host" evidence="1">
    <location>
        <position position="238"/>
    </location>
</feature>
<feature type="disulfide bond" evidence="2">
    <location>
        <begin position="82"/>
        <end position="135"/>
    </location>
</feature>
<feature type="disulfide bond" evidence="2">
    <location>
        <begin position="165"/>
        <end position="249"/>
    </location>
</feature>
<feature type="disulfide bond" evidence="2">
    <location>
        <begin position="191"/>
        <end position="244"/>
    </location>
</feature>
<feature type="disulfide bond" evidence="2">
    <location>
        <begin position="196"/>
        <end position="207"/>
    </location>
</feature>
<feature type="splice variant" id="VSP_038593" description="In isoform 2." evidence="3">
    <location>
        <begin position="1"/>
        <end position="29"/>
    </location>
</feature>
<evidence type="ECO:0000255" key="1"/>
<evidence type="ECO:0000255" key="2">
    <source>
        <dbReference type="HAMAP-Rule" id="MF_04131"/>
    </source>
</evidence>
<evidence type="ECO:0000305" key="3"/>
<sequence>MYGIEYTTILIFLISIILLNYILKSVTRIMDYIIYRSLLIYVALFALTRAQNYGLNLPITGSMDTVYANSTQEGIFLTSTLCLYYPTEASTQINDGEWKDSLSQMFLTKGWPTGSVYFKEYSNIVDFSVDPQLYCDYNLVLMKYDQNLELDMSELADLILNEWLCNPMDITLYYYQQSGESNKWISMGSSCTVKVCPLNTQTLGIGCQTTNVDSFEMVAENEKLAIVDVVDGINHKINFTTTTCTIRNCKKLGPRENVAVIQVGGSNVLDITADPTTNPQTERMMRVNWKKWWQVFYTIVDYINQIIQVMSKRSRSLNSAAFYYRV</sequence>
<organismHost>
    <name type="scientific">Homo sapiens</name>
    <name type="common">Human</name>
    <dbReference type="NCBI Taxonomy" id="9606"/>
</organismHost>
<name>VP7_ROTHX</name>
<protein>
    <recommendedName>
        <fullName evidence="2">Outer capsid glycoprotein VP7</fullName>
    </recommendedName>
</protein>
<comment type="function">
    <text evidence="2">Calcium-binding protein that interacts with rotavirus cell receptors once the initial attachment by VP4 has been achieved. Rotavirus attachment and entry into the host cell probably involves multiple sequential contacts between the outer capsid proteins VP4 and VP7, and the cell receptors. Following entry into the host cell, low intracellular or intravesicular Ca(2+) concentration probably causes the calcium-stabilized VP7 trimers to dissociate from the virion. This step is probably necessary for the membrane-disrupting entry step and the release of VP4, which is locked onto the virion by VP7.</text>
</comment>
<comment type="subunit">
    <text evidence="2">Homotrimer; disulfide-linked. 2 Ca(2+) ions bound at each subunit interface in the trimer hold the trimer together. Interacts with the intermediate capsid protein VP6. Interacts with the outer capsid protein VP5*.</text>
</comment>
<comment type="subcellular location">
    <subcellularLocation>
        <location evidence="2">Virion</location>
    </subcellularLocation>
    <subcellularLocation>
        <location evidence="2">Host endoplasmic reticulum lumen</location>
    </subcellularLocation>
    <text evidence="2">The outer layer contains 780 copies of VP7, grouped as 260 trimers. Immature double-layered particles assembled in the cytoplasm bud across the membrane of the endoplasmic reticulum, acquiring during this process a transient lipid membrane that is modified with the ER resident viral glycoproteins NSP4 and VP7; these enveloped particles also contain VP4. As the particles move towards the interior of the ER cisternae, the transient lipid membrane and the non-structural protein NSP4 are lost, while the virus surface proteins VP4 and VP7 rearrange to form the outermost virus protein layer, yielding mature infectious triple-layered particles.</text>
</comment>
<comment type="alternative products">
    <event type="alternative initiation"/>
    <isoform>
        <id>Q04840-1</id>
        <name>1</name>
        <sequence type="displayed"/>
    </isoform>
    <isoform>
        <id>Q04840-2</id>
        <name>2</name>
        <sequence type="described" ref="VSP_038593"/>
    </isoform>
</comment>
<comment type="PTM">
    <text evidence="2">N-glycosylated.</text>
</comment>
<comment type="PTM">
    <text evidence="2">The N-terminus is blocked possibly by pyroglutamic acid.</text>
</comment>
<comment type="miscellaneous">
    <text evidence="2">Some rotavirus strains are neuraminidase-sensitive and require sialic acid to attach to the cell surface. Some rotavirus strains are integrin-dependent. Some rotavirus strains depend on ganglioside for their entry into the host cell. Hsp70 also seems to be involved in the entry of some strains.</text>
</comment>
<comment type="miscellaneous">
    <text evidence="2">In group A rotaviruses, VP7 defines the G serotype.</text>
</comment>
<comment type="miscellaneous">
    <molecule>Isoform 2</molecule>
    <text evidence="3">Produced by alternative initiation at Met-30 of isoform 1.</text>
</comment>
<comment type="similarity">
    <text evidence="2">Belongs to the rotavirus VP7 family.</text>
</comment>
<keyword id="KW-0024">Alternative initiation</keyword>
<keyword id="KW-0106">Calcium</keyword>
<keyword id="KW-0167">Capsid protein</keyword>
<keyword id="KW-1015">Disulfide bond</keyword>
<keyword id="KW-0325">Glycoprotein</keyword>
<keyword id="KW-1038">Host endoplasmic reticulum</keyword>
<keyword id="KW-0945">Host-virus interaction</keyword>
<keyword id="KW-0479">Metal-binding</keyword>
<keyword id="KW-1152">Outer capsid protein</keyword>
<keyword id="KW-0732">Signal</keyword>
<keyword id="KW-1146">T=13 icosahedral capsid protein</keyword>
<keyword id="KW-0946">Virion</keyword>
<accession>Q04840</accession>
<reference key="1">
    <citation type="journal article" date="1993" name="Arch. Virol.">
        <title>Intra- and inter-season genetic variability in the VP7 gene of serotype 1 (monotype 1 a) rotavirus clinical isolates.</title>
        <authorList>
            <person name="Palombo E.A."/>
            <person name="Bishop R.F."/>
            <person name="Cotton R.G.H."/>
        </authorList>
    </citation>
    <scope>NUCLEOTIDE SEQUENCE [GENOMIC RNA]</scope>
</reference>
<proteinExistence type="inferred from homology"/>
<organism>
    <name type="scientific">Rotavirus A (isolate RVA/Human/Australia/A91a/1991/G1P[X])</name>
    <name type="common">RV-A</name>
    <dbReference type="NCBI Taxonomy" id="39011"/>
    <lineage>
        <taxon>Viruses</taxon>
        <taxon>Riboviria</taxon>
        <taxon>Orthornavirae</taxon>
        <taxon>Duplornaviricota</taxon>
        <taxon>Resentoviricetes</taxon>
        <taxon>Reovirales</taxon>
        <taxon>Sedoreoviridae</taxon>
        <taxon>Rotavirus</taxon>
        <taxon>Rotavirus A</taxon>
    </lineage>
</organism>